<evidence type="ECO:0000250" key="1"/>
<evidence type="ECO:0000250" key="2">
    <source>
        <dbReference type="UniProtKB" id="P24783"/>
    </source>
</evidence>
<evidence type="ECO:0000255" key="3">
    <source>
        <dbReference type="PROSITE-ProRule" id="PRU00541"/>
    </source>
</evidence>
<evidence type="ECO:0000255" key="4">
    <source>
        <dbReference type="PROSITE-ProRule" id="PRU00542"/>
    </source>
</evidence>
<evidence type="ECO:0000256" key="5">
    <source>
        <dbReference type="SAM" id="MobiDB-lite"/>
    </source>
</evidence>
<evidence type="ECO:0000305" key="6"/>
<proteinExistence type="inferred from homology"/>
<keyword id="KW-0067">ATP-binding</keyword>
<keyword id="KW-0963">Cytoplasm</keyword>
<keyword id="KW-0347">Helicase</keyword>
<keyword id="KW-0378">Hydrolase</keyword>
<keyword id="KW-1017">Isopeptide bond</keyword>
<keyword id="KW-0866">Nonsense-mediated mRNA decay</keyword>
<keyword id="KW-0547">Nucleotide-binding</keyword>
<keyword id="KW-0539">Nucleus</keyword>
<keyword id="KW-0597">Phosphoprotein</keyword>
<keyword id="KW-0690">Ribosome biogenesis</keyword>
<keyword id="KW-0694">RNA-binding</keyword>
<keyword id="KW-0698">rRNA processing</keyword>
<keyword id="KW-0832">Ubl conjugation</keyword>
<accession>A6ZRX0</accession>
<name>DBP2_YEAS7</name>
<protein>
    <recommendedName>
        <fullName>ATP-dependent RNA helicase DBP2</fullName>
        <ecNumber>3.6.4.13</ecNumber>
    </recommendedName>
    <alternativeName>
        <fullName>DEAD box protein 2</fullName>
    </alternativeName>
    <alternativeName>
        <fullName>p68-like protein</fullName>
    </alternativeName>
</protein>
<dbReference type="EC" id="3.6.4.13"/>
<dbReference type="EMBL" id="AAFW02000067">
    <property type="protein sequence ID" value="EDN62702.1"/>
    <property type="molecule type" value="Genomic_DNA"/>
</dbReference>
<dbReference type="SMR" id="A6ZRX0"/>
<dbReference type="IntAct" id="A6ZRX0">
    <property type="interactions" value="2"/>
</dbReference>
<dbReference type="MINT" id="A6ZRX0"/>
<dbReference type="HOGENOM" id="CLU_003041_16_9_1"/>
<dbReference type="Proteomes" id="UP000007060">
    <property type="component" value="Unassembled WGS sequence"/>
</dbReference>
<dbReference type="GO" id="GO:0005737">
    <property type="term" value="C:cytoplasm"/>
    <property type="evidence" value="ECO:0007669"/>
    <property type="project" value="UniProtKB-SubCell"/>
</dbReference>
<dbReference type="GO" id="GO:0005634">
    <property type="term" value="C:nucleus"/>
    <property type="evidence" value="ECO:0007669"/>
    <property type="project" value="UniProtKB-SubCell"/>
</dbReference>
<dbReference type="GO" id="GO:0005524">
    <property type="term" value="F:ATP binding"/>
    <property type="evidence" value="ECO:0007669"/>
    <property type="project" value="UniProtKB-KW"/>
</dbReference>
<dbReference type="GO" id="GO:0016887">
    <property type="term" value="F:ATP hydrolysis activity"/>
    <property type="evidence" value="ECO:0007669"/>
    <property type="project" value="RHEA"/>
</dbReference>
<dbReference type="GO" id="GO:0003723">
    <property type="term" value="F:RNA binding"/>
    <property type="evidence" value="ECO:0007669"/>
    <property type="project" value="UniProtKB-KW"/>
</dbReference>
<dbReference type="GO" id="GO:0003724">
    <property type="term" value="F:RNA helicase activity"/>
    <property type="evidence" value="ECO:0007669"/>
    <property type="project" value="UniProtKB-EC"/>
</dbReference>
<dbReference type="GO" id="GO:0000184">
    <property type="term" value="P:nuclear-transcribed mRNA catabolic process, nonsense-mediated decay"/>
    <property type="evidence" value="ECO:0007669"/>
    <property type="project" value="UniProtKB-KW"/>
</dbReference>
<dbReference type="GO" id="GO:0006364">
    <property type="term" value="P:rRNA processing"/>
    <property type="evidence" value="ECO:0007669"/>
    <property type="project" value="UniProtKB-KW"/>
</dbReference>
<dbReference type="CDD" id="cd17966">
    <property type="entry name" value="DEADc_DDX5_DDX17"/>
    <property type="match status" value="1"/>
</dbReference>
<dbReference type="CDD" id="cd18787">
    <property type="entry name" value="SF2_C_DEAD"/>
    <property type="match status" value="1"/>
</dbReference>
<dbReference type="FunFam" id="3.40.50.300:FF:000008">
    <property type="entry name" value="ATP-dependent RNA helicase RhlB"/>
    <property type="match status" value="1"/>
</dbReference>
<dbReference type="FunFam" id="3.40.50.300:FF:000079">
    <property type="entry name" value="probable ATP-dependent RNA helicase DDX17"/>
    <property type="match status" value="1"/>
</dbReference>
<dbReference type="Gene3D" id="3.40.50.300">
    <property type="entry name" value="P-loop containing nucleotide triphosphate hydrolases"/>
    <property type="match status" value="2"/>
</dbReference>
<dbReference type="InterPro" id="IPR011545">
    <property type="entry name" value="DEAD/DEAH_box_helicase_dom"/>
</dbReference>
<dbReference type="InterPro" id="IPR014001">
    <property type="entry name" value="Helicase_ATP-bd"/>
</dbReference>
<dbReference type="InterPro" id="IPR001650">
    <property type="entry name" value="Helicase_C-like"/>
</dbReference>
<dbReference type="InterPro" id="IPR027417">
    <property type="entry name" value="P-loop_NTPase"/>
</dbReference>
<dbReference type="InterPro" id="IPR000629">
    <property type="entry name" value="RNA-helicase_DEAD-box_CS"/>
</dbReference>
<dbReference type="InterPro" id="IPR014014">
    <property type="entry name" value="RNA_helicase_DEAD_Q_motif"/>
</dbReference>
<dbReference type="PANTHER" id="PTHR47958">
    <property type="entry name" value="ATP-DEPENDENT RNA HELICASE DBP3"/>
    <property type="match status" value="1"/>
</dbReference>
<dbReference type="Pfam" id="PF00270">
    <property type="entry name" value="DEAD"/>
    <property type="match status" value="1"/>
</dbReference>
<dbReference type="Pfam" id="PF00271">
    <property type="entry name" value="Helicase_C"/>
    <property type="match status" value="1"/>
</dbReference>
<dbReference type="SMART" id="SM00487">
    <property type="entry name" value="DEXDc"/>
    <property type="match status" value="1"/>
</dbReference>
<dbReference type="SMART" id="SM00490">
    <property type="entry name" value="HELICc"/>
    <property type="match status" value="1"/>
</dbReference>
<dbReference type="SUPFAM" id="SSF52540">
    <property type="entry name" value="P-loop containing nucleoside triphosphate hydrolases"/>
    <property type="match status" value="1"/>
</dbReference>
<dbReference type="PROSITE" id="PS00039">
    <property type="entry name" value="DEAD_ATP_HELICASE"/>
    <property type="match status" value="1"/>
</dbReference>
<dbReference type="PROSITE" id="PS51192">
    <property type="entry name" value="HELICASE_ATP_BIND_1"/>
    <property type="match status" value="1"/>
</dbReference>
<dbReference type="PROSITE" id="PS51194">
    <property type="entry name" value="HELICASE_CTER"/>
    <property type="match status" value="1"/>
</dbReference>
<dbReference type="PROSITE" id="PS51195">
    <property type="entry name" value="Q_MOTIF"/>
    <property type="match status" value="1"/>
</dbReference>
<organism>
    <name type="scientific">Saccharomyces cerevisiae (strain YJM789)</name>
    <name type="common">Baker's yeast</name>
    <dbReference type="NCBI Taxonomy" id="307796"/>
    <lineage>
        <taxon>Eukaryota</taxon>
        <taxon>Fungi</taxon>
        <taxon>Dikarya</taxon>
        <taxon>Ascomycota</taxon>
        <taxon>Saccharomycotina</taxon>
        <taxon>Saccharomycetes</taxon>
        <taxon>Saccharomycetales</taxon>
        <taxon>Saccharomycetaceae</taxon>
        <taxon>Saccharomyces</taxon>
    </lineage>
</organism>
<comment type="function">
    <text evidence="1">ATP-dependent RNA helicase involved nonsense-mediated mRNA decay and ribosome biogenesis through rRNA processing.</text>
</comment>
<comment type="catalytic activity">
    <reaction>
        <text>ATP + H2O = ADP + phosphate + H(+)</text>
        <dbReference type="Rhea" id="RHEA:13065"/>
        <dbReference type="ChEBI" id="CHEBI:15377"/>
        <dbReference type="ChEBI" id="CHEBI:15378"/>
        <dbReference type="ChEBI" id="CHEBI:30616"/>
        <dbReference type="ChEBI" id="CHEBI:43474"/>
        <dbReference type="ChEBI" id="CHEBI:456216"/>
        <dbReference type="EC" id="3.6.4.13"/>
    </reaction>
</comment>
<comment type="subunit">
    <text evidence="1">Associates with polysomes.</text>
</comment>
<comment type="subcellular location">
    <subcellularLocation>
        <location evidence="1">Cytoplasm</location>
    </subcellularLocation>
    <subcellularLocation>
        <location evidence="1">Nucleus</location>
    </subcellularLocation>
</comment>
<comment type="domain">
    <text>The Q motif is unique to and characteristic of the DEAD box family of RNA helicases and controls ATP binding and hydrolysis.</text>
</comment>
<comment type="similarity">
    <text evidence="6">Belongs to the DEAD box helicase family. DDX5/DBP2 subfamily.</text>
</comment>
<feature type="chain" id="PRO_0000310190" description="ATP-dependent RNA helicase DBP2">
    <location>
        <begin position="1"/>
        <end position="546"/>
    </location>
</feature>
<feature type="domain" description="Helicase ATP-binding" evidence="3">
    <location>
        <begin position="144"/>
        <end position="319"/>
    </location>
</feature>
<feature type="domain" description="Helicase C-terminal" evidence="4">
    <location>
        <begin position="347"/>
        <end position="494"/>
    </location>
</feature>
<feature type="region of interest" description="Disordered" evidence="5">
    <location>
        <begin position="1"/>
        <end position="56"/>
    </location>
</feature>
<feature type="region of interest" description="Disordered" evidence="5">
    <location>
        <begin position="493"/>
        <end position="546"/>
    </location>
</feature>
<feature type="short sequence motif" description="Q motif">
    <location>
        <begin position="113"/>
        <end position="141"/>
    </location>
</feature>
<feature type="short sequence motif" description="DEAD box">
    <location>
        <begin position="267"/>
        <end position="270"/>
    </location>
</feature>
<feature type="compositionally biased region" description="Polar residues" evidence="5">
    <location>
        <begin position="8"/>
        <end position="17"/>
    </location>
</feature>
<feature type="compositionally biased region" description="Basic and acidic residues" evidence="5">
    <location>
        <begin position="20"/>
        <end position="33"/>
    </location>
</feature>
<feature type="compositionally biased region" description="Gly residues" evidence="5">
    <location>
        <begin position="498"/>
        <end position="540"/>
    </location>
</feature>
<feature type="binding site" evidence="3">
    <location>
        <begin position="157"/>
        <end position="164"/>
    </location>
    <ligand>
        <name>ATP</name>
        <dbReference type="ChEBI" id="CHEBI:30616"/>
    </ligand>
</feature>
<feature type="modified residue" description="Phosphoserine" evidence="2">
    <location>
        <position position="88"/>
    </location>
</feature>
<feature type="modified residue" description="Phosphoserine" evidence="2">
    <location>
        <position position="90"/>
    </location>
</feature>
<feature type="cross-link" description="Glycyl lysine isopeptide (Lys-Gly) (interchain with G-Cter in ubiquitin)" evidence="2">
    <location>
        <position position="474"/>
    </location>
</feature>
<gene>
    <name type="primary">DBP2</name>
    <name type="ORF">SCY_4681</name>
</gene>
<sequence length="546" mass="60985">MTYGGRDQQYNKTNYNSRGGDFRGGRNSDRNSYNDRPQGGNYRGGFGGRSNYNQPQELIKPNWDEELPKLPTFEKNFYVEHESVRDRSDSEIAQFRKENEMTISGHDIPKPITTFDEAGFPDYVLNEVKAEGFDKPTGIQCQGWPMALSGRDMVGIAATGSGKTLSYCLPGIVHINAQPLLAPGDGPIVLVLAPTRELAVQIQTECSKFGHSSRIRNTCVYGGVPKSQQIRDLSRGSEIVIATPGRLIDMLEIGKTNLKRVTYLVLDEADRMLDMGFEPQIRKIVDQIRPDRQTLMWSATWPKEVKQLAADYLNDPIQVQVGSLELSASHNITQIVEVVSDFEKRDRLNKYLETASQDNEYKTLIFASTKRMCDDITKYLREDGWPALAIHGDKDQRERDWVLQEFRNGRSPIMVATDVAARGIDVKGINYVINYDMPGNIEDYVHRIGRTGRAGATGTAISFFTEQNKGLGAKLISIMREANQNIPPELLKYDRRSYGGGHPRYGGGRGGRGGYGRRGGYGGGRGGYGGNRQRDGGWGNRGRSNY</sequence>
<reference key="1">
    <citation type="journal article" date="2007" name="Proc. Natl. Acad. Sci. U.S.A.">
        <title>Genome sequencing and comparative analysis of Saccharomyces cerevisiae strain YJM789.</title>
        <authorList>
            <person name="Wei W."/>
            <person name="McCusker J.H."/>
            <person name="Hyman R.W."/>
            <person name="Jones T."/>
            <person name="Ning Y."/>
            <person name="Cao Z."/>
            <person name="Gu Z."/>
            <person name="Bruno D."/>
            <person name="Miranda M."/>
            <person name="Nguyen M."/>
            <person name="Wilhelmy J."/>
            <person name="Komp C."/>
            <person name="Tamse R."/>
            <person name="Wang X."/>
            <person name="Jia P."/>
            <person name="Luedi P."/>
            <person name="Oefner P.J."/>
            <person name="David L."/>
            <person name="Dietrich F.S."/>
            <person name="Li Y."/>
            <person name="Davis R.W."/>
            <person name="Steinmetz L.M."/>
        </authorList>
    </citation>
    <scope>NUCLEOTIDE SEQUENCE [LARGE SCALE GENOMIC DNA]</scope>
    <source>
        <strain>YJM789</strain>
    </source>
</reference>